<evidence type="ECO:0000250" key="1">
    <source>
        <dbReference type="UniProtKB" id="P10175"/>
    </source>
</evidence>
<evidence type="ECO:0000250" key="2">
    <source>
        <dbReference type="UniProtKB" id="P10176"/>
    </source>
</evidence>
<evidence type="ECO:0000305" key="3"/>
<keyword id="KW-0472">Membrane</keyword>
<keyword id="KW-0496">Mitochondrion</keyword>
<keyword id="KW-0999">Mitochondrion inner membrane</keyword>
<keyword id="KW-0809">Transit peptide</keyword>
<keyword id="KW-0812">Transmembrane</keyword>
<keyword id="KW-1133">Transmembrane helix</keyword>
<keyword id="KW-0832">Ubl conjugation</keyword>
<reference key="1">
    <citation type="journal article" date="2003" name="Proc. Natl. Acad. Sci. U.S.A.">
        <title>Adaptive evolution of cytochrome c oxidase subunit VIII in anthropoid primates.</title>
        <authorList>
            <person name="Goldberg A."/>
            <person name="Wildman D.E."/>
            <person name="Schmidt T.R."/>
            <person name="Huttemann M."/>
            <person name="Goodman M."/>
            <person name="Weiss M.L."/>
            <person name="Grossman L.I."/>
        </authorList>
    </citation>
    <scope>NUCLEOTIDE SEQUENCE [MRNA]</scope>
</reference>
<sequence>MSVLTPLLLRGLTGSARRLPVPRAQVHSMPPEQKLGVLELAIGFTSCLVTFLLPAGWILSHLDSYKKRG</sequence>
<organism>
    <name type="scientific">Saimiri sciureus</name>
    <name type="common">Common squirrel monkey</name>
    <dbReference type="NCBI Taxonomy" id="9521"/>
    <lineage>
        <taxon>Eukaryota</taxon>
        <taxon>Metazoa</taxon>
        <taxon>Chordata</taxon>
        <taxon>Craniata</taxon>
        <taxon>Vertebrata</taxon>
        <taxon>Euteleostomi</taxon>
        <taxon>Mammalia</taxon>
        <taxon>Eutheria</taxon>
        <taxon>Euarchontoglires</taxon>
        <taxon>Primates</taxon>
        <taxon>Haplorrhini</taxon>
        <taxon>Platyrrhini</taxon>
        <taxon>Cebidae</taxon>
        <taxon>Saimiriinae</taxon>
        <taxon>Saimiri</taxon>
    </lineage>
</organism>
<feature type="transit peptide" description="Mitochondrion" evidence="2">
    <location>
        <begin position="1"/>
        <end position="25"/>
    </location>
</feature>
<feature type="chain" id="PRO_0000006196" description="Cytochrome c oxidase subunit 8A, mitochondrial">
    <location>
        <begin position="26"/>
        <end position="69"/>
    </location>
</feature>
<feature type="topological domain" description="Mitochondrial matrix" evidence="2">
    <location>
        <begin position="26"/>
        <end position="36"/>
    </location>
</feature>
<feature type="transmembrane region" description="Helical" evidence="1">
    <location>
        <begin position="37"/>
        <end position="60"/>
    </location>
</feature>
<feature type="topological domain" description="Mitochondrial intermembrane" evidence="2">
    <location>
        <begin position="61"/>
        <end position="69"/>
    </location>
</feature>
<feature type="short sequence motif" description="SIFI-degron" evidence="2">
    <location>
        <begin position="2"/>
        <end position="19"/>
    </location>
</feature>
<accession>Q863G5</accession>
<proteinExistence type="inferred from homology"/>
<name>COX8A_SAISC</name>
<comment type="function">
    <text evidence="1">Component of the cytochrome c oxidase, the last enzyme in the mitochondrial electron transport chain which drives oxidative phosphorylation. The respiratory chain contains 3 multisubunit complexes succinate dehydrogenase (complex II, CII), ubiquinol-cytochrome c oxidoreductase (cytochrome b-c1 complex, complex III, CIII) and cytochrome c oxidase (complex IV, CIV), that cooperate to transfer electrons derived from NADH and succinate to molecular oxygen, creating an electrochemical gradient over the inner membrane that drives transmembrane transport and the ATP synthase. Cytochrome c oxidase is the component of the respiratory chain that catalyzes the reduction of oxygen to water. Electrons originating from reduced cytochrome c in the intermembrane space (IMS) are transferred via the dinuclear copper A center (CU(A)) of subunit 2 and heme A of subunit 1 to the active site in subunit 1, a binuclear center (BNC) formed by heme A3 and copper B (CU(B)). The BNC reduces molecular oxygen to 2 water molecules using 4 electrons from cytochrome c in the IMS and 4 protons from the mitochondrial matrix.</text>
</comment>
<comment type="pathway">
    <text evidence="1">Energy metabolism; oxidative phosphorylation.</text>
</comment>
<comment type="subunit">
    <text evidence="2">Component of the cytochrome c oxidase (complex IV, CIV), a multisubunit enzyme composed of 14 subunits. The complex is composed of a catalytic core of 3 subunits MT-CO1, MT-CO2 and MT-CO3, encoded in the mitochondrial DNA, and 11 supernumerary subunits COX4I, COX5A, COX5B, COX6A, COX6B, COX6C, COX7A, COX7B, COX7C, COX8 and NDUFA4, which are encoded in the nuclear genome. The complex exists as a monomer or a dimer and forms supercomplexes (SCs) in the inner mitochondrial membrane with NADH-ubiquinone oxidoreductase (complex I, CI) and ubiquinol-cytochrome c oxidoreductase (cytochrome b-c1 complex, complex III, CIII), resulting in different assemblies (supercomplex SCI(1)III(2)IV(1) and megacomplex MCI(2)III(2)IV(2)).</text>
</comment>
<comment type="subcellular location">
    <subcellularLocation>
        <location evidence="2">Mitochondrion inner membrane</location>
        <topology evidence="2">Single-pass membrane protein</topology>
    </subcellularLocation>
</comment>
<comment type="PTM">
    <text evidence="2">In response to mitochondrial stress, the precursor protein is ubiquitinated by the SIFI complex in the cytoplasm before mitochondrial import, leading to its degradation. Within the SIFI complex, UBR4 initiates ubiquitin chain that are further elongated or branched by KCMF1.</text>
</comment>
<comment type="similarity">
    <text evidence="3">Belongs to the cytochrome c oxidase VIII family.</text>
</comment>
<dbReference type="EMBL" id="AY254821">
    <property type="protein sequence ID" value="AAP32252.1"/>
    <property type="molecule type" value="mRNA"/>
</dbReference>
<dbReference type="SMR" id="Q863G5"/>
<dbReference type="UniPathway" id="UPA00705"/>
<dbReference type="GO" id="GO:0005743">
    <property type="term" value="C:mitochondrial inner membrane"/>
    <property type="evidence" value="ECO:0007669"/>
    <property type="project" value="UniProtKB-SubCell"/>
</dbReference>
<dbReference type="GO" id="GO:0045277">
    <property type="term" value="C:respiratory chain complex IV"/>
    <property type="evidence" value="ECO:0007669"/>
    <property type="project" value="InterPro"/>
</dbReference>
<dbReference type="GO" id="GO:0006123">
    <property type="term" value="P:mitochondrial electron transport, cytochrome c to oxygen"/>
    <property type="evidence" value="ECO:0007669"/>
    <property type="project" value="InterPro"/>
</dbReference>
<dbReference type="CDD" id="cd00930">
    <property type="entry name" value="Cyt_c_Oxidase_VIII"/>
    <property type="match status" value="1"/>
</dbReference>
<dbReference type="FunFam" id="4.10.81.10:FF:000001">
    <property type="entry name" value="Cytochrome c oxidase subunit 8B, mitochondrial"/>
    <property type="match status" value="1"/>
</dbReference>
<dbReference type="Gene3D" id="4.10.81.10">
    <property type="entry name" value="Cytochrome c oxidase, subunit 8"/>
    <property type="match status" value="1"/>
</dbReference>
<dbReference type="InterPro" id="IPR003205">
    <property type="entry name" value="Cyt_c_oxidase_su8"/>
</dbReference>
<dbReference type="InterPro" id="IPR036548">
    <property type="entry name" value="Cyt_c_oxidase_su8_sf"/>
</dbReference>
<dbReference type="PANTHER" id="PTHR16717">
    <property type="entry name" value="CYTOCHROME C OXIDASE POLYPEPTIDE VIII"/>
    <property type="match status" value="1"/>
</dbReference>
<dbReference type="PANTHER" id="PTHR16717:SF1">
    <property type="entry name" value="CYTOCHROME C OXIDASE SUBUNIT 8A, MITOCHONDRIAL"/>
    <property type="match status" value="1"/>
</dbReference>
<dbReference type="Pfam" id="PF02285">
    <property type="entry name" value="COX8"/>
    <property type="match status" value="1"/>
</dbReference>
<dbReference type="SUPFAM" id="SSF81431">
    <property type="entry name" value="Mitochondrial cytochrome c oxidase subunit VIIIb (aka IX)"/>
    <property type="match status" value="1"/>
</dbReference>
<gene>
    <name type="primary">COX8A</name>
    <name type="synonym">COX8</name>
    <name type="synonym">COX8L</name>
</gene>
<protein>
    <recommendedName>
        <fullName>Cytochrome c oxidase subunit 8A, mitochondrial</fullName>
    </recommendedName>
    <alternativeName>
        <fullName>Cytochrome c oxidase polypeptide VIII-liver/heart</fullName>
    </alternativeName>
    <alternativeName>
        <fullName>Cytochrome c oxidase subunit 8-2</fullName>
    </alternativeName>
</protein>